<sequence>MQRRDFIRNASLALAAFGLPSLPACAASRSGQMGLRRLGQPQPFDFATLKGQARALAQAPYKSHKRVLPGRLEGLDWDQYQSIGYRQDHALWADQPGKFQAKFFHLGLYFHSPVRMFDVVDGKAQELAYDGAAFNYGKSGIKDGELPADLGFAGFRLNTRKDTDRDFAAFLGASYFRAVGKEGQYGQSARGLAIDTGMGKPEEFPDFIAYYLEQPSADSDTIVVYGLLDSPSVAGAYRFAITNGDVLLMDIDSALYPRKAIERLGIAPCTSMYQVGENDRRMAWDWRPEIHDTDGLSLWTGAGEWIWRPLLNPRNLRFNMFVDRNPRGFGLLQRDRNFDHYQDDGVFYEKRPCLWVEPKGEWGEGSVQLVEIPTVDETFDNIVAFWNPKEKPQPGQELLVGYRLYWGAEPPARPPLAHCVASRTGLGGVVGKKREYFSWRFAVDFEGGELARLIDKGEVEAVVEASRGRVEIVSARPLREINGYRAMFDLVPPEGSTEQIDIRLFLRSGGKTLTETWLYQYTPPPAGAPERTLY</sequence>
<dbReference type="EMBL" id="AM743169">
    <property type="protein sequence ID" value="CAQ43702.1"/>
    <property type="molecule type" value="Genomic_DNA"/>
</dbReference>
<dbReference type="RefSeq" id="WP_012478684.1">
    <property type="nucleotide sequence ID" value="NC_010943.1"/>
</dbReference>
<dbReference type="SMR" id="B2FU50"/>
<dbReference type="EnsemblBacteria" id="CAQ43702">
    <property type="protein sequence ID" value="CAQ43702"/>
    <property type="gene ID" value="Smlt0091"/>
</dbReference>
<dbReference type="KEGG" id="sml:Smlt0091"/>
<dbReference type="eggNOG" id="COG3131">
    <property type="taxonomic scope" value="Bacteria"/>
</dbReference>
<dbReference type="HOGENOM" id="CLU_023403_2_0_6"/>
<dbReference type="UniPathway" id="UPA00637"/>
<dbReference type="Proteomes" id="UP000008840">
    <property type="component" value="Chromosome"/>
</dbReference>
<dbReference type="GO" id="GO:0030288">
    <property type="term" value="C:outer membrane-bounded periplasmic space"/>
    <property type="evidence" value="ECO:0007669"/>
    <property type="project" value="TreeGrafter"/>
</dbReference>
<dbReference type="GO" id="GO:0030246">
    <property type="term" value="F:carbohydrate binding"/>
    <property type="evidence" value="ECO:0007669"/>
    <property type="project" value="InterPro"/>
</dbReference>
<dbReference type="GO" id="GO:0003824">
    <property type="term" value="F:catalytic activity"/>
    <property type="evidence" value="ECO:0007669"/>
    <property type="project" value="InterPro"/>
</dbReference>
<dbReference type="GO" id="GO:0051274">
    <property type="term" value="P:beta-glucan biosynthetic process"/>
    <property type="evidence" value="ECO:0007669"/>
    <property type="project" value="TreeGrafter"/>
</dbReference>
<dbReference type="FunFam" id="2.70.98.10:FF:000001">
    <property type="entry name" value="Glucans biosynthesis protein G"/>
    <property type="match status" value="1"/>
</dbReference>
<dbReference type="Gene3D" id="2.70.98.10">
    <property type="match status" value="1"/>
</dbReference>
<dbReference type="Gene3D" id="2.60.40.10">
    <property type="entry name" value="Immunoglobulins"/>
    <property type="match status" value="1"/>
</dbReference>
<dbReference type="HAMAP" id="MF_01068">
    <property type="entry name" value="MdoD_OpgD"/>
    <property type="match status" value="1"/>
</dbReference>
<dbReference type="InterPro" id="IPR011013">
    <property type="entry name" value="Gal_mutarotase_sf_dom"/>
</dbReference>
<dbReference type="InterPro" id="IPR014718">
    <property type="entry name" value="GH-type_carb-bd"/>
</dbReference>
<dbReference type="InterPro" id="IPR023724">
    <property type="entry name" value="Glucan_biosyn_MdoD"/>
</dbReference>
<dbReference type="InterPro" id="IPR014438">
    <property type="entry name" value="Glucan_biosyn_MdoG/MdoD"/>
</dbReference>
<dbReference type="InterPro" id="IPR007444">
    <property type="entry name" value="Glucan_biosyn_MdoG_C"/>
</dbReference>
<dbReference type="InterPro" id="IPR013783">
    <property type="entry name" value="Ig-like_fold"/>
</dbReference>
<dbReference type="InterPro" id="IPR014756">
    <property type="entry name" value="Ig_E-set"/>
</dbReference>
<dbReference type="PANTHER" id="PTHR30504">
    <property type="entry name" value="GLUCANS BIOSYNTHESIS PROTEIN"/>
    <property type="match status" value="1"/>
</dbReference>
<dbReference type="PANTHER" id="PTHR30504:SF3">
    <property type="entry name" value="GLUCANS BIOSYNTHESIS PROTEIN D"/>
    <property type="match status" value="1"/>
</dbReference>
<dbReference type="Pfam" id="PF04349">
    <property type="entry name" value="MdoG"/>
    <property type="match status" value="1"/>
</dbReference>
<dbReference type="PIRSF" id="PIRSF006281">
    <property type="entry name" value="MdoG"/>
    <property type="match status" value="1"/>
</dbReference>
<dbReference type="SUPFAM" id="SSF81296">
    <property type="entry name" value="E set domains"/>
    <property type="match status" value="1"/>
</dbReference>
<dbReference type="SUPFAM" id="SSF74650">
    <property type="entry name" value="Galactose mutarotase-like"/>
    <property type="match status" value="1"/>
</dbReference>
<organism>
    <name type="scientific">Stenotrophomonas maltophilia (strain K279a)</name>
    <dbReference type="NCBI Taxonomy" id="522373"/>
    <lineage>
        <taxon>Bacteria</taxon>
        <taxon>Pseudomonadati</taxon>
        <taxon>Pseudomonadota</taxon>
        <taxon>Gammaproteobacteria</taxon>
        <taxon>Lysobacterales</taxon>
        <taxon>Lysobacteraceae</taxon>
        <taxon>Stenotrophomonas</taxon>
        <taxon>Stenotrophomonas maltophilia group</taxon>
    </lineage>
</organism>
<proteinExistence type="inferred from homology"/>
<feature type="signal peptide" description="Tat-type signal" evidence="1">
    <location>
        <begin position="1"/>
        <end position="26"/>
    </location>
</feature>
<feature type="chain" id="PRO_5000342786" description="Glucans biosynthesis protein D">
    <location>
        <begin position="27"/>
        <end position="534"/>
    </location>
</feature>
<evidence type="ECO:0000255" key="1">
    <source>
        <dbReference type="HAMAP-Rule" id="MF_01068"/>
    </source>
</evidence>
<gene>
    <name evidence="1" type="primary">opgD</name>
    <name type="ordered locus">Smlt0091</name>
</gene>
<accession>B2FU50</accession>
<comment type="function">
    <text evidence="1">Probably involved in the control of the structural glucose backbone of osmoregulated periplasmic glucans (OPGs).</text>
</comment>
<comment type="pathway">
    <text evidence="1">Glycan metabolism; osmoregulated periplasmic glucan (OPG) biosynthesis.</text>
</comment>
<comment type="subcellular location">
    <subcellularLocation>
        <location evidence="1">Periplasm</location>
    </subcellularLocation>
</comment>
<comment type="PTM">
    <text>Predicted to be exported by the Tat system. The position of the signal peptide cleavage has not been experimentally proven.</text>
</comment>
<comment type="similarity">
    <text evidence="1">Belongs to the OpgD/OpgG family.</text>
</comment>
<protein>
    <recommendedName>
        <fullName evidence="1">Glucans biosynthesis protein D</fullName>
    </recommendedName>
</protein>
<reference key="1">
    <citation type="journal article" date="2008" name="Genome Biol.">
        <title>The complete genome, comparative and functional analysis of Stenotrophomonas maltophilia reveals an organism heavily shielded by drug resistance determinants.</title>
        <authorList>
            <person name="Crossman L.C."/>
            <person name="Gould V.C."/>
            <person name="Dow J.M."/>
            <person name="Vernikos G.S."/>
            <person name="Okazaki A."/>
            <person name="Sebaihia M."/>
            <person name="Saunders D."/>
            <person name="Arrowsmith C."/>
            <person name="Carver T."/>
            <person name="Peters N."/>
            <person name="Adlem E."/>
            <person name="Kerhornou A."/>
            <person name="Lord A."/>
            <person name="Murphy L."/>
            <person name="Seeger K."/>
            <person name="Squares R."/>
            <person name="Rutter S."/>
            <person name="Quail M.A."/>
            <person name="Rajandream M.A."/>
            <person name="Harris D."/>
            <person name="Churcher C."/>
            <person name="Bentley S.D."/>
            <person name="Parkhill J."/>
            <person name="Thomson N.R."/>
            <person name="Avison M.B."/>
        </authorList>
    </citation>
    <scope>NUCLEOTIDE SEQUENCE [LARGE SCALE GENOMIC DNA]</scope>
    <source>
        <strain>K279a</strain>
    </source>
</reference>
<keyword id="KW-0574">Periplasm</keyword>
<keyword id="KW-1185">Reference proteome</keyword>
<keyword id="KW-0732">Signal</keyword>
<name>OPGD_STRMK</name>